<accession>C1C8X2</accession>
<name>FMT_STRP7</name>
<comment type="function">
    <text evidence="1">Attaches a formyl group to the free amino group of methionyl-tRNA(fMet). The formyl group appears to play a dual role in the initiator identity of N-formylmethionyl-tRNA by promoting its recognition by IF2 and preventing the misappropriation of this tRNA by the elongation apparatus.</text>
</comment>
<comment type="catalytic activity">
    <reaction evidence="1">
        <text>L-methionyl-tRNA(fMet) + (6R)-10-formyltetrahydrofolate = N-formyl-L-methionyl-tRNA(fMet) + (6S)-5,6,7,8-tetrahydrofolate + H(+)</text>
        <dbReference type="Rhea" id="RHEA:24380"/>
        <dbReference type="Rhea" id="RHEA-COMP:9952"/>
        <dbReference type="Rhea" id="RHEA-COMP:9953"/>
        <dbReference type="ChEBI" id="CHEBI:15378"/>
        <dbReference type="ChEBI" id="CHEBI:57453"/>
        <dbReference type="ChEBI" id="CHEBI:78530"/>
        <dbReference type="ChEBI" id="CHEBI:78844"/>
        <dbReference type="ChEBI" id="CHEBI:195366"/>
        <dbReference type="EC" id="2.1.2.9"/>
    </reaction>
</comment>
<comment type="similarity">
    <text evidence="1">Belongs to the Fmt family.</text>
</comment>
<dbReference type="EC" id="2.1.2.9" evidence="1"/>
<dbReference type="EMBL" id="CP000918">
    <property type="protein sequence ID" value="ACO17468.1"/>
    <property type="molecule type" value="Genomic_DNA"/>
</dbReference>
<dbReference type="RefSeq" id="WP_000163693.1">
    <property type="nucleotide sequence ID" value="NC_012468.1"/>
</dbReference>
<dbReference type="SMR" id="C1C8X2"/>
<dbReference type="KEGG" id="snm:SP70585_1775"/>
<dbReference type="HOGENOM" id="CLU_033347_1_1_9"/>
<dbReference type="Proteomes" id="UP000002211">
    <property type="component" value="Chromosome"/>
</dbReference>
<dbReference type="GO" id="GO:0005829">
    <property type="term" value="C:cytosol"/>
    <property type="evidence" value="ECO:0007669"/>
    <property type="project" value="TreeGrafter"/>
</dbReference>
<dbReference type="GO" id="GO:0004479">
    <property type="term" value="F:methionyl-tRNA formyltransferase activity"/>
    <property type="evidence" value="ECO:0007669"/>
    <property type="project" value="UniProtKB-UniRule"/>
</dbReference>
<dbReference type="CDD" id="cd08646">
    <property type="entry name" value="FMT_core_Met-tRNA-FMT_N"/>
    <property type="match status" value="1"/>
</dbReference>
<dbReference type="CDD" id="cd08704">
    <property type="entry name" value="Met_tRNA_FMT_C"/>
    <property type="match status" value="1"/>
</dbReference>
<dbReference type="FunFam" id="3.10.25.10:FF:000004">
    <property type="entry name" value="Methionyl-tRNA formyltransferase"/>
    <property type="match status" value="1"/>
</dbReference>
<dbReference type="FunFam" id="3.40.50.170:FF:000004">
    <property type="entry name" value="Methionyl-tRNA formyltransferase"/>
    <property type="match status" value="1"/>
</dbReference>
<dbReference type="Gene3D" id="3.10.25.10">
    <property type="entry name" value="Formyl transferase, C-terminal domain"/>
    <property type="match status" value="1"/>
</dbReference>
<dbReference type="Gene3D" id="3.40.50.170">
    <property type="entry name" value="Formyl transferase, N-terminal domain"/>
    <property type="match status" value="1"/>
</dbReference>
<dbReference type="HAMAP" id="MF_00182">
    <property type="entry name" value="Formyl_trans"/>
    <property type="match status" value="1"/>
</dbReference>
<dbReference type="InterPro" id="IPR005794">
    <property type="entry name" value="Fmt"/>
</dbReference>
<dbReference type="InterPro" id="IPR005793">
    <property type="entry name" value="Formyl_trans_C"/>
</dbReference>
<dbReference type="InterPro" id="IPR037022">
    <property type="entry name" value="Formyl_trans_C_sf"/>
</dbReference>
<dbReference type="InterPro" id="IPR002376">
    <property type="entry name" value="Formyl_transf_N"/>
</dbReference>
<dbReference type="InterPro" id="IPR036477">
    <property type="entry name" value="Formyl_transf_N_sf"/>
</dbReference>
<dbReference type="InterPro" id="IPR011034">
    <property type="entry name" value="Formyl_transferase-like_C_sf"/>
</dbReference>
<dbReference type="InterPro" id="IPR001555">
    <property type="entry name" value="GART_AS"/>
</dbReference>
<dbReference type="InterPro" id="IPR044135">
    <property type="entry name" value="Met-tRNA-FMT_C"/>
</dbReference>
<dbReference type="InterPro" id="IPR041711">
    <property type="entry name" value="Met-tRNA-FMT_N"/>
</dbReference>
<dbReference type="NCBIfam" id="TIGR00460">
    <property type="entry name" value="fmt"/>
    <property type="match status" value="1"/>
</dbReference>
<dbReference type="PANTHER" id="PTHR11138">
    <property type="entry name" value="METHIONYL-TRNA FORMYLTRANSFERASE"/>
    <property type="match status" value="1"/>
</dbReference>
<dbReference type="PANTHER" id="PTHR11138:SF5">
    <property type="entry name" value="METHIONYL-TRNA FORMYLTRANSFERASE, MITOCHONDRIAL"/>
    <property type="match status" value="1"/>
</dbReference>
<dbReference type="Pfam" id="PF02911">
    <property type="entry name" value="Formyl_trans_C"/>
    <property type="match status" value="1"/>
</dbReference>
<dbReference type="Pfam" id="PF00551">
    <property type="entry name" value="Formyl_trans_N"/>
    <property type="match status" value="1"/>
</dbReference>
<dbReference type="SUPFAM" id="SSF50486">
    <property type="entry name" value="FMT C-terminal domain-like"/>
    <property type="match status" value="1"/>
</dbReference>
<dbReference type="SUPFAM" id="SSF53328">
    <property type="entry name" value="Formyltransferase"/>
    <property type="match status" value="1"/>
</dbReference>
<dbReference type="PROSITE" id="PS00373">
    <property type="entry name" value="GART"/>
    <property type="match status" value="1"/>
</dbReference>
<organism>
    <name type="scientific">Streptococcus pneumoniae (strain 70585)</name>
    <dbReference type="NCBI Taxonomy" id="488221"/>
    <lineage>
        <taxon>Bacteria</taxon>
        <taxon>Bacillati</taxon>
        <taxon>Bacillota</taxon>
        <taxon>Bacilli</taxon>
        <taxon>Lactobacillales</taxon>
        <taxon>Streptococcaceae</taxon>
        <taxon>Streptococcus</taxon>
    </lineage>
</organism>
<feature type="chain" id="PRO_1000190043" description="Methionyl-tRNA formyltransferase">
    <location>
        <begin position="1"/>
        <end position="311"/>
    </location>
</feature>
<feature type="binding site" evidence="1">
    <location>
        <begin position="110"/>
        <end position="113"/>
    </location>
    <ligand>
        <name>(6S)-5,6,7,8-tetrahydrofolate</name>
        <dbReference type="ChEBI" id="CHEBI:57453"/>
    </ligand>
</feature>
<reference key="1">
    <citation type="journal article" date="2010" name="Genome Biol.">
        <title>Structure and dynamics of the pan-genome of Streptococcus pneumoniae and closely related species.</title>
        <authorList>
            <person name="Donati C."/>
            <person name="Hiller N.L."/>
            <person name="Tettelin H."/>
            <person name="Muzzi A."/>
            <person name="Croucher N.J."/>
            <person name="Angiuoli S.V."/>
            <person name="Oggioni M."/>
            <person name="Dunning Hotopp J.C."/>
            <person name="Hu F.Z."/>
            <person name="Riley D.R."/>
            <person name="Covacci A."/>
            <person name="Mitchell T.J."/>
            <person name="Bentley S.D."/>
            <person name="Kilian M."/>
            <person name="Ehrlich G.D."/>
            <person name="Rappuoli R."/>
            <person name="Moxon E.R."/>
            <person name="Masignani V."/>
        </authorList>
    </citation>
    <scope>NUCLEOTIDE SEQUENCE [LARGE SCALE GENOMIC DNA]</scope>
    <source>
        <strain>70585</strain>
    </source>
</reference>
<evidence type="ECO:0000255" key="1">
    <source>
        <dbReference type="HAMAP-Rule" id="MF_00182"/>
    </source>
</evidence>
<sequence>MTKLIFMGTPDFSATVLKGLLTDDRYEILAVVTQPDRAVGRKKVIQETPVKQAAKEAGLSIYQPEKLSGSPEMEDLMKLGADGIVTAAFGQFLPSKLLDSMDFAVNVHASLLPRHRGGAPIHYALIQGDEEAGVTIMEMVKEMDAGDMISRRSIPITDEDNVGTLFEKLALVGRDLLLDTLPAYIAGDIKPEPQDTSQVTFSPNIKPEEEKLDWNKTNRQLFNQIRGMNPWPVAHTFLKGDRFKIYEALPVEGQGNPGEILSIGKKELIVATAEGALSLKQVQPAGKPKMDIASFLNGVGRTLTVGERFGD</sequence>
<keyword id="KW-0648">Protein biosynthesis</keyword>
<keyword id="KW-0808">Transferase</keyword>
<proteinExistence type="inferred from homology"/>
<gene>
    <name evidence="1" type="primary">fmt</name>
    <name type="ordered locus">SP70585_1775</name>
</gene>
<protein>
    <recommendedName>
        <fullName evidence="1">Methionyl-tRNA formyltransferase</fullName>
        <ecNumber evidence="1">2.1.2.9</ecNumber>
    </recommendedName>
</protein>